<organism>
    <name type="scientific">Bos taurus</name>
    <name type="common">Bovine</name>
    <dbReference type="NCBI Taxonomy" id="9913"/>
    <lineage>
        <taxon>Eukaryota</taxon>
        <taxon>Metazoa</taxon>
        <taxon>Chordata</taxon>
        <taxon>Craniata</taxon>
        <taxon>Vertebrata</taxon>
        <taxon>Euteleostomi</taxon>
        <taxon>Mammalia</taxon>
        <taxon>Eutheria</taxon>
        <taxon>Laurasiatheria</taxon>
        <taxon>Artiodactyla</taxon>
        <taxon>Ruminantia</taxon>
        <taxon>Pecora</taxon>
        <taxon>Bovidae</taxon>
        <taxon>Bovinae</taxon>
        <taxon>Bos</taxon>
    </lineage>
</organism>
<accession>A7MB64</accession>
<gene>
    <name type="primary">ITPRIP</name>
</gene>
<proteinExistence type="evidence at transcript level"/>
<reference key="1">
    <citation type="submission" date="2007-07" db="EMBL/GenBank/DDBJ databases">
        <authorList>
            <consortium name="NIH - Mammalian Gene Collection (MGC) project"/>
        </authorList>
    </citation>
    <scope>NUCLEOTIDE SEQUENCE [LARGE SCALE MRNA]</scope>
    <source>
        <strain>Hereford</strain>
        <tissue>Fetal skin</tissue>
    </source>
</reference>
<feature type="signal peptide" evidence="3">
    <location>
        <begin position="1"/>
        <end position="15"/>
    </location>
</feature>
<feature type="chain" id="PRO_0000320569" description="Inositol 1,4,5-trisphosphate receptor-interacting protein">
    <location>
        <begin position="16"/>
        <end position="556"/>
    </location>
</feature>
<feature type="topological domain" description="Extracellular" evidence="3">
    <location>
        <begin position="16"/>
        <end position="88"/>
    </location>
</feature>
<feature type="transmembrane region" description="Helical" evidence="3">
    <location>
        <begin position="89"/>
        <end position="107"/>
    </location>
</feature>
<feature type="topological domain" description="Cytoplasmic" evidence="3">
    <location>
        <begin position="108"/>
        <end position="556"/>
    </location>
</feature>
<feature type="coiled-coil region" evidence="3">
    <location>
        <begin position="32"/>
        <end position="87"/>
    </location>
</feature>
<feature type="glycosylation site" description="N-linked (GlcNAc...) asparagine" evidence="3">
    <location>
        <position position="27"/>
    </location>
</feature>
<feature type="glycosylation site" description="N-linked (GlcNAc...) asparagine" evidence="3">
    <location>
        <position position="84"/>
    </location>
</feature>
<dbReference type="EMBL" id="BC151359">
    <property type="protein sequence ID" value="AAI51360.1"/>
    <property type="molecule type" value="mRNA"/>
</dbReference>
<dbReference type="RefSeq" id="NP_001094648.1">
    <property type="nucleotide sequence ID" value="NM_001101178.1"/>
</dbReference>
<dbReference type="RefSeq" id="XP_005225647.1">
    <property type="nucleotide sequence ID" value="XM_005225590.5"/>
</dbReference>
<dbReference type="RefSeq" id="XP_005225649.1">
    <property type="nucleotide sequence ID" value="XM_005225592.5"/>
</dbReference>
<dbReference type="RefSeq" id="XP_010818213.1">
    <property type="nucleotide sequence ID" value="XM_010819911.2"/>
</dbReference>
<dbReference type="FunCoup" id="A7MB64">
    <property type="interactions" value="801"/>
</dbReference>
<dbReference type="STRING" id="9913.ENSBTAP00000005212"/>
<dbReference type="GlyCosmos" id="A7MB64">
    <property type="glycosylation" value="2 sites, No reported glycans"/>
</dbReference>
<dbReference type="GlyGen" id="A7MB64">
    <property type="glycosylation" value="2 sites"/>
</dbReference>
<dbReference type="PaxDb" id="9913-ENSBTAP00000005212"/>
<dbReference type="Ensembl" id="ENSBTAT00000005212.6">
    <property type="protein sequence ID" value="ENSBTAP00000005212.4"/>
    <property type="gene ID" value="ENSBTAG00000003990.6"/>
</dbReference>
<dbReference type="Ensembl" id="ENSBTAT00000090576.1">
    <property type="protein sequence ID" value="ENSBTAP00000075727.1"/>
    <property type="gene ID" value="ENSBTAG00000003990.6"/>
</dbReference>
<dbReference type="Ensembl" id="ENSBTAT00000099101.1">
    <property type="protein sequence ID" value="ENSBTAP00000095392.1"/>
    <property type="gene ID" value="ENSBTAG00000003990.6"/>
</dbReference>
<dbReference type="Ensembl" id="ENSBTAT00000099107.1">
    <property type="protein sequence ID" value="ENSBTAP00000103476.1"/>
    <property type="gene ID" value="ENSBTAG00000003990.6"/>
</dbReference>
<dbReference type="Ensembl" id="ENSBTAT00000103011.1">
    <property type="protein sequence ID" value="ENSBTAP00000098240.1"/>
    <property type="gene ID" value="ENSBTAG00000003990.6"/>
</dbReference>
<dbReference type="Ensembl" id="ENSBTAT00000105682.1">
    <property type="protein sequence ID" value="ENSBTAP00000101546.1"/>
    <property type="gene ID" value="ENSBTAG00000003990.6"/>
</dbReference>
<dbReference type="Ensembl" id="ENSBTAT00000117533.1">
    <property type="protein sequence ID" value="ENSBTAP00000081209.1"/>
    <property type="gene ID" value="ENSBTAG00000003990.6"/>
</dbReference>
<dbReference type="Ensembl" id="ENSBTAT00000121643.1">
    <property type="protein sequence ID" value="ENSBTAP00000098469.1"/>
    <property type="gene ID" value="ENSBTAG00000003990.6"/>
</dbReference>
<dbReference type="Ensembl" id="ENSBTAT00000126441.1">
    <property type="protein sequence ID" value="ENSBTAP00000087221.1"/>
    <property type="gene ID" value="ENSBTAG00000003990.6"/>
</dbReference>
<dbReference type="Ensembl" id="ENSBTAT00000128466.1">
    <property type="protein sequence ID" value="ENSBTAP00000075214.1"/>
    <property type="gene ID" value="ENSBTAG00000003990.6"/>
</dbReference>
<dbReference type="GeneID" id="538685"/>
<dbReference type="KEGG" id="bta:538685"/>
<dbReference type="CTD" id="85450"/>
<dbReference type="VEuPathDB" id="HostDB:ENSBTAG00000003990"/>
<dbReference type="VGNC" id="VGNC:30349">
    <property type="gene designation" value="ITPRIP"/>
</dbReference>
<dbReference type="eggNOG" id="ENOG502QRDF">
    <property type="taxonomic scope" value="Eukaryota"/>
</dbReference>
<dbReference type="GeneTree" id="ENSGT01050000244827"/>
<dbReference type="HOGENOM" id="CLU_025485_2_0_1"/>
<dbReference type="InParanoid" id="A7MB64"/>
<dbReference type="OMA" id="CHLHCLQ"/>
<dbReference type="OrthoDB" id="9923553at2759"/>
<dbReference type="TreeFam" id="TF332277"/>
<dbReference type="Proteomes" id="UP000009136">
    <property type="component" value="Chromosome 26"/>
</dbReference>
<dbReference type="Bgee" id="ENSBTAG00000003990">
    <property type="expression patterns" value="Expressed in neutrophil and 104 other cell types or tissues"/>
</dbReference>
<dbReference type="GO" id="GO:0016020">
    <property type="term" value="C:membrane"/>
    <property type="evidence" value="ECO:0000318"/>
    <property type="project" value="GO_Central"/>
</dbReference>
<dbReference type="GO" id="GO:0005640">
    <property type="term" value="C:nuclear outer membrane"/>
    <property type="evidence" value="ECO:0000250"/>
    <property type="project" value="UniProtKB"/>
</dbReference>
<dbReference type="GO" id="GO:0005886">
    <property type="term" value="C:plasma membrane"/>
    <property type="evidence" value="ECO:0007669"/>
    <property type="project" value="UniProtKB-SubCell"/>
</dbReference>
<dbReference type="GO" id="GO:0004860">
    <property type="term" value="F:protein kinase inhibitor activity"/>
    <property type="evidence" value="ECO:0000318"/>
    <property type="project" value="GO_Central"/>
</dbReference>
<dbReference type="GO" id="GO:0008625">
    <property type="term" value="P:extrinsic apoptotic signaling pathway via death domain receptors"/>
    <property type="evidence" value="ECO:0007669"/>
    <property type="project" value="Ensembl"/>
</dbReference>
<dbReference type="GO" id="GO:1902042">
    <property type="term" value="P:negative regulation of extrinsic apoptotic signaling pathway via death domain receptors"/>
    <property type="evidence" value="ECO:0007669"/>
    <property type="project" value="Ensembl"/>
</dbReference>
<dbReference type="FunFam" id="1.10.1410.40:FF:000006">
    <property type="entry name" value="Inositol 1,4,5-trisphosphate receptor-interacting protein"/>
    <property type="match status" value="1"/>
</dbReference>
<dbReference type="Gene3D" id="1.10.1410.40">
    <property type="match status" value="1"/>
</dbReference>
<dbReference type="Gene3D" id="3.30.460.90">
    <property type="match status" value="1"/>
</dbReference>
<dbReference type="InterPro" id="IPR026250">
    <property type="entry name" value="ITPRIP-like"/>
</dbReference>
<dbReference type="InterPro" id="IPR046906">
    <property type="entry name" value="Mab-21_HhH/H2TH-like"/>
</dbReference>
<dbReference type="InterPro" id="IPR024810">
    <property type="entry name" value="MAB21L/cGLR"/>
</dbReference>
<dbReference type="PANTHER" id="PTHR10656">
    <property type="entry name" value="CELL FATE DETERMINING PROTEIN MAB21-RELATED"/>
    <property type="match status" value="1"/>
</dbReference>
<dbReference type="PANTHER" id="PTHR10656:SF8">
    <property type="entry name" value="INOSITOL 1,4,5-TRISPHOSPHATE RECEPTOR-INTERACTING PROTEIN"/>
    <property type="match status" value="1"/>
</dbReference>
<dbReference type="Pfam" id="PF20266">
    <property type="entry name" value="Mab-21_C"/>
    <property type="match status" value="1"/>
</dbReference>
<dbReference type="PRINTS" id="PR02107">
    <property type="entry name" value="INOS145TPRIP"/>
</dbReference>
<dbReference type="SMART" id="SM01265">
    <property type="entry name" value="Mab-21"/>
    <property type="match status" value="1"/>
</dbReference>
<comment type="function">
    <text evidence="2">Enhances Ca(2+)-mediated inhibition of inositol 1,4,5-triphosphate receptor (ITPR) Ca(2+) release.</text>
</comment>
<comment type="subunit">
    <text evidence="2">Interacts with ITPR.</text>
</comment>
<comment type="subcellular location">
    <subcellularLocation>
        <location evidence="2">Cell membrane</location>
        <topology evidence="3">Single-pass type I membrane protein</topology>
    </subcellularLocation>
    <subcellularLocation>
        <location evidence="1">Nucleus outer membrane</location>
        <topology evidence="3">Single-pass type I membrane protein</topology>
    </subcellularLocation>
</comment>
<comment type="similarity">
    <text evidence="4">Belongs to the ITPRIP family.</text>
</comment>
<keyword id="KW-1003">Cell membrane</keyword>
<keyword id="KW-0175">Coiled coil</keyword>
<keyword id="KW-0325">Glycoprotein</keyword>
<keyword id="KW-0472">Membrane</keyword>
<keyword id="KW-0539">Nucleus</keyword>
<keyword id="KW-1185">Reference proteome</keyword>
<keyword id="KW-0732">Signal</keyword>
<keyword id="KW-0812">Transmembrane</keyword>
<keyword id="KW-1133">Transmembrane helix</keyword>
<name>IPRI_BOVIN</name>
<evidence type="ECO:0000250" key="1">
    <source>
        <dbReference type="UniProtKB" id="Q3TNL8"/>
    </source>
</evidence>
<evidence type="ECO:0000250" key="2">
    <source>
        <dbReference type="UniProtKB" id="Q8IWB1"/>
    </source>
</evidence>
<evidence type="ECO:0000255" key="3"/>
<evidence type="ECO:0000305" key="4"/>
<protein>
    <recommendedName>
        <fullName>Inositol 1,4,5-trisphosphate receptor-interacting protein</fullName>
    </recommendedName>
</protein>
<sequence>MALGLFRVCLVVVTAIINHPLLFPRENTTVPENEEEIIRQMQAHQEKLQLEQLRLEEEMARLAADKEAEKEALERVAEEGQQQNESRTAWDLWSTLCMILFLVIEVWRQDHQDAPSPECLGSDEDELPDLEGAPLRGLTLPNRATLDHFYERCIRGATADAARTREFVEGFVDDLLEALRSLCSRDSDMEVEDFIGVDSMYENWQVNKPLLCDLFVPFMPPEPYHFHPELWCSSRSVPLDRQGYGQIKVVRADEDTLGCICGKTKLGEDMLCLLHGRNNVVHHGSKAADPLCAPNSPYLDTMRVMKWFQTALTRAWHRIEHKYEFDLAFGQLDTPGSLKIRFRSGKFMPFNLIPVIQCDDSDLYFVSHLAREPGGGTRASSTDWLLSFAVYERHFLRVTSKALPEGACHLSCLQIASFLLSKQSRLTGPSGLGSYHLKTALLHLLLARRPADWKAEQLDARLHELLCFLEKSLLEKKLQHFFIGNRKVPQAMGLPEAVRRAEPLNLFRPFVLQRSLYRKTVDSFYEMLKNAPALISEYSLHIPSDHASLPPKTVIL</sequence>